<reference key="1">
    <citation type="journal article" date="2005" name="DNA Res.">
        <title>Complete genome sequence of the facultative anaerobic magnetotactic bacterium Magnetospirillum sp. strain AMB-1.</title>
        <authorList>
            <person name="Matsunaga T."/>
            <person name="Okamura Y."/>
            <person name="Fukuda Y."/>
            <person name="Wahyudi A.T."/>
            <person name="Murase Y."/>
            <person name="Takeyama H."/>
        </authorList>
    </citation>
    <scope>NUCLEOTIDE SEQUENCE [LARGE SCALE GENOMIC DNA]</scope>
    <source>
        <strain>ATCC 700264 / AMB-1</strain>
    </source>
</reference>
<comment type="function">
    <text evidence="1">NDH-1 shuttles electrons from NADH, via FMN and iron-sulfur (Fe-S) centers, to quinones in the respiratory chain. The immediate electron acceptor for the enzyme in this species is believed to be ubiquinone. Couples the redox reaction to proton translocation (for every two electrons transferred, four hydrogen ions are translocated across the cytoplasmic membrane), and thus conserves the redox energy in a proton gradient.</text>
</comment>
<comment type="catalytic activity">
    <reaction evidence="1">
        <text>a quinone + NADH + 5 H(+)(in) = a quinol + NAD(+) + 4 H(+)(out)</text>
        <dbReference type="Rhea" id="RHEA:57888"/>
        <dbReference type="ChEBI" id="CHEBI:15378"/>
        <dbReference type="ChEBI" id="CHEBI:24646"/>
        <dbReference type="ChEBI" id="CHEBI:57540"/>
        <dbReference type="ChEBI" id="CHEBI:57945"/>
        <dbReference type="ChEBI" id="CHEBI:132124"/>
    </reaction>
</comment>
<comment type="subunit">
    <text evidence="1">NDH-1 is composed of 14 different subunits. Subunits NuoB, C, D, E, F, and G constitute the peripheral sector of the complex.</text>
</comment>
<comment type="subcellular location">
    <subcellularLocation>
        <location evidence="1">Cell inner membrane</location>
        <topology evidence="1">Peripheral membrane protein</topology>
        <orientation evidence="1">Cytoplasmic side</orientation>
    </subcellularLocation>
</comment>
<comment type="similarity">
    <text evidence="1">Belongs to the complex I 30 kDa subunit family.</text>
</comment>
<organism>
    <name type="scientific">Paramagnetospirillum magneticum (strain ATCC 700264 / AMB-1)</name>
    <name type="common">Magnetospirillum magneticum</name>
    <dbReference type="NCBI Taxonomy" id="342108"/>
    <lineage>
        <taxon>Bacteria</taxon>
        <taxon>Pseudomonadati</taxon>
        <taxon>Pseudomonadota</taxon>
        <taxon>Alphaproteobacteria</taxon>
        <taxon>Rhodospirillales</taxon>
        <taxon>Magnetospirillaceae</taxon>
        <taxon>Paramagnetospirillum</taxon>
    </lineage>
</organism>
<proteinExistence type="inferred from homology"/>
<gene>
    <name evidence="1" type="primary">nuoC</name>
    <name type="ordered locus">amb2785</name>
</gene>
<sequence length="199" mass="22692">MTQALKDLGEYIAQALPQDVLGTEVNRCGELSLTVKAASIVKVMTYLKDDAGCLFKQLVDVCGVDWPGREQRFDVVYHLLSMKHNQRVRVKVATDEETAVPSVTGVFSSAGWFEREVWDMYGVLFSDHPDLRRILTDYGFEGHPLRKDFPLTGYVEMRYDDETKRVVYEPVKLTQDFRSFDFLSPWEGPGMLPGDEKAN</sequence>
<accession>Q2W3I6</accession>
<name>NUOC_PARM1</name>
<dbReference type="EC" id="7.1.1.-" evidence="1"/>
<dbReference type="EMBL" id="AP007255">
    <property type="protein sequence ID" value="BAE51589.1"/>
    <property type="molecule type" value="Genomic_DNA"/>
</dbReference>
<dbReference type="RefSeq" id="WP_011385163.1">
    <property type="nucleotide sequence ID" value="NC_007626.1"/>
</dbReference>
<dbReference type="SMR" id="Q2W3I6"/>
<dbReference type="STRING" id="342108.amb2785"/>
<dbReference type="KEGG" id="mag:amb2785"/>
<dbReference type="HOGENOM" id="CLU_042628_2_1_5"/>
<dbReference type="OrthoDB" id="9803286at2"/>
<dbReference type="Proteomes" id="UP000007058">
    <property type="component" value="Chromosome"/>
</dbReference>
<dbReference type="GO" id="GO:0005886">
    <property type="term" value="C:plasma membrane"/>
    <property type="evidence" value="ECO:0007669"/>
    <property type="project" value="UniProtKB-SubCell"/>
</dbReference>
<dbReference type="GO" id="GO:0008137">
    <property type="term" value="F:NADH dehydrogenase (ubiquinone) activity"/>
    <property type="evidence" value="ECO:0007669"/>
    <property type="project" value="InterPro"/>
</dbReference>
<dbReference type="GO" id="GO:0050136">
    <property type="term" value="F:NADH:ubiquinone reductase (non-electrogenic) activity"/>
    <property type="evidence" value="ECO:0007669"/>
    <property type="project" value="UniProtKB-UniRule"/>
</dbReference>
<dbReference type="GO" id="GO:0048038">
    <property type="term" value="F:quinone binding"/>
    <property type="evidence" value="ECO:0007669"/>
    <property type="project" value="UniProtKB-KW"/>
</dbReference>
<dbReference type="FunFam" id="3.30.460.80:FF:000002">
    <property type="entry name" value="NADH dehydrogenase iron-sulfur protein 3, mitochondrial"/>
    <property type="match status" value="1"/>
</dbReference>
<dbReference type="Gene3D" id="3.30.460.80">
    <property type="entry name" value="NADH:ubiquinone oxidoreductase, 30kDa subunit"/>
    <property type="match status" value="1"/>
</dbReference>
<dbReference type="HAMAP" id="MF_01357">
    <property type="entry name" value="NDH1_NuoC"/>
    <property type="match status" value="1"/>
</dbReference>
<dbReference type="InterPro" id="IPR010218">
    <property type="entry name" value="NADH_DH_suC"/>
</dbReference>
<dbReference type="InterPro" id="IPR037232">
    <property type="entry name" value="NADH_quin_OxRdtase_su_C/D-like"/>
</dbReference>
<dbReference type="InterPro" id="IPR001268">
    <property type="entry name" value="NADH_UbQ_OxRdtase_30kDa_su"/>
</dbReference>
<dbReference type="InterPro" id="IPR020396">
    <property type="entry name" value="NADH_UbQ_OxRdtase_CS"/>
</dbReference>
<dbReference type="NCBIfam" id="TIGR01961">
    <property type="entry name" value="NuoC_fam"/>
    <property type="match status" value="1"/>
</dbReference>
<dbReference type="NCBIfam" id="NF004730">
    <property type="entry name" value="PRK06074.1-1"/>
    <property type="match status" value="1"/>
</dbReference>
<dbReference type="NCBIfam" id="NF004733">
    <property type="entry name" value="PRK06074.1-5"/>
    <property type="match status" value="1"/>
</dbReference>
<dbReference type="PANTHER" id="PTHR10884:SF14">
    <property type="entry name" value="NADH DEHYDROGENASE [UBIQUINONE] IRON-SULFUR PROTEIN 3, MITOCHONDRIAL"/>
    <property type="match status" value="1"/>
</dbReference>
<dbReference type="PANTHER" id="PTHR10884">
    <property type="entry name" value="NADH DEHYDROGENASE UBIQUINONE IRON-SULFUR PROTEIN 3"/>
    <property type="match status" value="1"/>
</dbReference>
<dbReference type="Pfam" id="PF00329">
    <property type="entry name" value="Complex1_30kDa"/>
    <property type="match status" value="1"/>
</dbReference>
<dbReference type="SUPFAM" id="SSF143243">
    <property type="entry name" value="Nqo5-like"/>
    <property type="match status" value="1"/>
</dbReference>
<dbReference type="PROSITE" id="PS00542">
    <property type="entry name" value="COMPLEX1_30K"/>
    <property type="match status" value="1"/>
</dbReference>
<feature type="chain" id="PRO_0000358120" description="NADH-quinone oxidoreductase subunit C">
    <location>
        <begin position="1"/>
        <end position="199"/>
    </location>
</feature>
<protein>
    <recommendedName>
        <fullName evidence="1">NADH-quinone oxidoreductase subunit C</fullName>
        <ecNumber evidence="1">7.1.1.-</ecNumber>
    </recommendedName>
    <alternativeName>
        <fullName evidence="1">NADH dehydrogenase I subunit C</fullName>
    </alternativeName>
    <alternativeName>
        <fullName evidence="1">NDH-1 subunit C</fullName>
    </alternativeName>
</protein>
<evidence type="ECO:0000255" key="1">
    <source>
        <dbReference type="HAMAP-Rule" id="MF_01357"/>
    </source>
</evidence>
<keyword id="KW-0997">Cell inner membrane</keyword>
<keyword id="KW-1003">Cell membrane</keyword>
<keyword id="KW-0472">Membrane</keyword>
<keyword id="KW-0520">NAD</keyword>
<keyword id="KW-0874">Quinone</keyword>
<keyword id="KW-1278">Translocase</keyword>
<keyword id="KW-0813">Transport</keyword>
<keyword id="KW-0830">Ubiquinone</keyword>